<feature type="chain" id="PRO_0000117218" description="tRNA uridine 5-carboxymethylaminomethyl modification enzyme MnmG">
    <location>
        <begin position="1"/>
        <end position="634"/>
    </location>
</feature>
<feature type="binding site" evidence="1">
    <location>
        <begin position="14"/>
        <end position="19"/>
    </location>
    <ligand>
        <name>FAD</name>
        <dbReference type="ChEBI" id="CHEBI:57692"/>
    </ligand>
</feature>
<feature type="binding site" evidence="1">
    <location>
        <begin position="279"/>
        <end position="293"/>
    </location>
    <ligand>
        <name>NAD(+)</name>
        <dbReference type="ChEBI" id="CHEBI:57540"/>
    </ligand>
</feature>
<evidence type="ECO:0000255" key="1">
    <source>
        <dbReference type="HAMAP-Rule" id="MF_00129"/>
    </source>
</evidence>
<proteinExistence type="inferred from homology"/>
<gene>
    <name evidence="1" type="primary">mnmG</name>
    <name evidence="1" type="synonym">gidA</name>
    <name type="ordered locus">XCC0377</name>
</gene>
<comment type="function">
    <text evidence="1">NAD-binding protein involved in the addition of a carboxymethylaminomethyl (cmnm) group at the wobble position (U34) of certain tRNAs, forming tRNA-cmnm(5)s(2)U34.</text>
</comment>
<comment type="cofactor">
    <cofactor evidence="1">
        <name>FAD</name>
        <dbReference type="ChEBI" id="CHEBI:57692"/>
    </cofactor>
</comment>
<comment type="subunit">
    <text evidence="1">Homodimer. Heterotetramer of two MnmE and two MnmG subunits.</text>
</comment>
<comment type="subcellular location">
    <subcellularLocation>
        <location evidence="1">Cytoplasm</location>
    </subcellularLocation>
</comment>
<comment type="similarity">
    <text evidence="1">Belongs to the MnmG family.</text>
</comment>
<protein>
    <recommendedName>
        <fullName evidence="1">tRNA uridine 5-carboxymethylaminomethyl modification enzyme MnmG</fullName>
    </recommendedName>
    <alternativeName>
        <fullName evidence="1">Glucose-inhibited division protein A</fullName>
    </alternativeName>
</protein>
<organism>
    <name type="scientific">Xanthomonas campestris pv. campestris (strain ATCC 33913 / DSM 3586 / NCPPB 528 / LMG 568 / P 25)</name>
    <dbReference type="NCBI Taxonomy" id="190485"/>
    <lineage>
        <taxon>Bacteria</taxon>
        <taxon>Pseudomonadati</taxon>
        <taxon>Pseudomonadota</taxon>
        <taxon>Gammaproteobacteria</taxon>
        <taxon>Lysobacterales</taxon>
        <taxon>Lysobacteraceae</taxon>
        <taxon>Xanthomonas</taxon>
    </lineage>
</organism>
<reference key="1">
    <citation type="journal article" date="2002" name="Nature">
        <title>Comparison of the genomes of two Xanthomonas pathogens with differing host specificities.</title>
        <authorList>
            <person name="da Silva A.C.R."/>
            <person name="Ferro J.A."/>
            <person name="Reinach F.C."/>
            <person name="Farah C.S."/>
            <person name="Furlan L.R."/>
            <person name="Quaggio R.B."/>
            <person name="Monteiro-Vitorello C.B."/>
            <person name="Van Sluys M.A."/>
            <person name="Almeida N.F. Jr."/>
            <person name="Alves L.M.C."/>
            <person name="do Amaral A.M."/>
            <person name="Bertolini M.C."/>
            <person name="Camargo L.E.A."/>
            <person name="Camarotte G."/>
            <person name="Cannavan F."/>
            <person name="Cardozo J."/>
            <person name="Chambergo F."/>
            <person name="Ciapina L.P."/>
            <person name="Cicarelli R.M.B."/>
            <person name="Coutinho L.L."/>
            <person name="Cursino-Santos J.R."/>
            <person name="El-Dorry H."/>
            <person name="Faria J.B."/>
            <person name="Ferreira A.J.S."/>
            <person name="Ferreira R.C.C."/>
            <person name="Ferro M.I.T."/>
            <person name="Formighieri E.F."/>
            <person name="Franco M.C."/>
            <person name="Greggio C.C."/>
            <person name="Gruber A."/>
            <person name="Katsuyama A.M."/>
            <person name="Kishi L.T."/>
            <person name="Leite R.P."/>
            <person name="Lemos E.G.M."/>
            <person name="Lemos M.V.F."/>
            <person name="Locali E.C."/>
            <person name="Machado M.A."/>
            <person name="Madeira A.M.B.N."/>
            <person name="Martinez-Rossi N.M."/>
            <person name="Martins E.C."/>
            <person name="Meidanis J."/>
            <person name="Menck C.F.M."/>
            <person name="Miyaki C.Y."/>
            <person name="Moon D.H."/>
            <person name="Moreira L.M."/>
            <person name="Novo M.T.M."/>
            <person name="Okura V.K."/>
            <person name="Oliveira M.C."/>
            <person name="Oliveira V.R."/>
            <person name="Pereira H.A."/>
            <person name="Rossi A."/>
            <person name="Sena J.A.D."/>
            <person name="Silva C."/>
            <person name="de Souza R.F."/>
            <person name="Spinola L.A.F."/>
            <person name="Takita M.A."/>
            <person name="Tamura R.E."/>
            <person name="Teixeira E.C."/>
            <person name="Tezza R.I.D."/>
            <person name="Trindade dos Santos M."/>
            <person name="Truffi D."/>
            <person name="Tsai S.M."/>
            <person name="White F.F."/>
            <person name="Setubal J.C."/>
            <person name="Kitajima J.P."/>
        </authorList>
    </citation>
    <scope>NUCLEOTIDE SEQUENCE [LARGE SCALE GENOMIC DNA]</scope>
    <source>
        <strain>ATCC 33913 / DSM 3586 / NCPPB 528 / LMG 568 / P 25</strain>
    </source>
</reference>
<keyword id="KW-0963">Cytoplasm</keyword>
<keyword id="KW-0274">FAD</keyword>
<keyword id="KW-0285">Flavoprotein</keyword>
<keyword id="KW-0520">NAD</keyword>
<keyword id="KW-1185">Reference proteome</keyword>
<keyword id="KW-0819">tRNA processing</keyword>
<sequence>MSDSFYRYDVIVIGGGHAGTEAALAAARAGARTLLLTHNIETVGAMSCNPAIGGIGKGHLVKEIDALGGAMAKAADLAGIQWRTLNASKGPAVRATRCQADRNLYRSAIRRIVEAQPNLTVFQAAVDDLIIHNGAAEGDSVRGVITQTGLRFEATAVVLTAGTFLAGKIHVGETQYAAGRMGDPPATTLAARLRERPFAIDRLKTGTPPRIDGRTLDYTMMDEQPGDDPLPVMSFMGQVSDHPTQVSCWITHTTEQTHDIIRGALHRSPLYSGQIEGIGPRYCPSIEDKVVRFADKTSHQIFVEPEGLDVTEIYPNGISTSLPFDVQLALVRSIRGFAQAHITRPGYAIEYDFFDPRGLKASLETKAVGGLFFAGQINGTTGYEEAAAQGLLAGLNAARQAQALPAWSPRRDEAYLGVLVDDLITHGTTEPYRMFTSRAEYRLQLREDNADLRLTGVGRAMGLVDDARWARFSSKQEAVQRETARLSALWATPGNALGREVVDTLGVPMSRETNVLDLIKRPELSYAALMRVPTLGPGVDDAQVAEQVEIGVKYAGYLNRQRDEIARQQRHETTPIPEGFDYAGVRGLSMEVQQKLERVRPQSIGQAQRIPGMTPAAISLLLVHLERARRSQVA</sequence>
<name>MNMG_XANCP</name>
<dbReference type="EMBL" id="AE008922">
    <property type="protein sequence ID" value="AAM39696.1"/>
    <property type="molecule type" value="Genomic_DNA"/>
</dbReference>
<dbReference type="RefSeq" id="NP_635772.1">
    <property type="nucleotide sequence ID" value="NC_003902.1"/>
</dbReference>
<dbReference type="RefSeq" id="WP_011035631.1">
    <property type="nucleotide sequence ID" value="NC_003902.1"/>
</dbReference>
<dbReference type="SMR" id="Q8PDG1"/>
<dbReference type="STRING" id="190485.XCC0377"/>
<dbReference type="EnsemblBacteria" id="AAM39696">
    <property type="protein sequence ID" value="AAM39696"/>
    <property type="gene ID" value="XCC0377"/>
</dbReference>
<dbReference type="KEGG" id="xcc:XCC0377"/>
<dbReference type="PATRIC" id="fig|190485.4.peg.414"/>
<dbReference type="eggNOG" id="COG0445">
    <property type="taxonomic scope" value="Bacteria"/>
</dbReference>
<dbReference type="HOGENOM" id="CLU_007831_2_2_6"/>
<dbReference type="OrthoDB" id="9815560at2"/>
<dbReference type="Proteomes" id="UP000001010">
    <property type="component" value="Chromosome"/>
</dbReference>
<dbReference type="GO" id="GO:0005829">
    <property type="term" value="C:cytosol"/>
    <property type="evidence" value="ECO:0000318"/>
    <property type="project" value="GO_Central"/>
</dbReference>
<dbReference type="GO" id="GO:0050660">
    <property type="term" value="F:flavin adenine dinucleotide binding"/>
    <property type="evidence" value="ECO:0000318"/>
    <property type="project" value="GO_Central"/>
</dbReference>
<dbReference type="GO" id="GO:0030488">
    <property type="term" value="P:tRNA methylation"/>
    <property type="evidence" value="ECO:0000318"/>
    <property type="project" value="GO_Central"/>
</dbReference>
<dbReference type="GO" id="GO:0002098">
    <property type="term" value="P:tRNA wobble uridine modification"/>
    <property type="evidence" value="ECO:0000318"/>
    <property type="project" value="GO_Central"/>
</dbReference>
<dbReference type="FunFam" id="1.10.10.1800:FF:000001">
    <property type="entry name" value="tRNA uridine 5-carboxymethylaminomethyl modification enzyme MnmG"/>
    <property type="match status" value="1"/>
</dbReference>
<dbReference type="FunFam" id="1.10.150.570:FF:000001">
    <property type="entry name" value="tRNA uridine 5-carboxymethylaminomethyl modification enzyme MnmG"/>
    <property type="match status" value="1"/>
</dbReference>
<dbReference type="FunFam" id="3.50.50.60:FF:000002">
    <property type="entry name" value="tRNA uridine 5-carboxymethylaminomethyl modification enzyme MnmG"/>
    <property type="match status" value="1"/>
</dbReference>
<dbReference type="FunFam" id="3.50.50.60:FF:000010">
    <property type="entry name" value="tRNA uridine 5-carboxymethylaminomethyl modification enzyme MnmG"/>
    <property type="match status" value="1"/>
</dbReference>
<dbReference type="Gene3D" id="3.50.50.60">
    <property type="entry name" value="FAD/NAD(P)-binding domain"/>
    <property type="match status" value="2"/>
</dbReference>
<dbReference type="Gene3D" id="1.10.150.570">
    <property type="entry name" value="GidA associated domain, C-terminal subdomain"/>
    <property type="match status" value="1"/>
</dbReference>
<dbReference type="Gene3D" id="1.10.10.1800">
    <property type="entry name" value="tRNA uridine 5-carboxymethylaminomethyl modification enzyme MnmG/GidA"/>
    <property type="match status" value="1"/>
</dbReference>
<dbReference type="HAMAP" id="MF_00129">
    <property type="entry name" value="MnmG_GidA"/>
    <property type="match status" value="1"/>
</dbReference>
<dbReference type="InterPro" id="IPR036188">
    <property type="entry name" value="FAD/NAD-bd_sf"/>
</dbReference>
<dbReference type="InterPro" id="IPR049312">
    <property type="entry name" value="GIDA_C_N"/>
</dbReference>
<dbReference type="InterPro" id="IPR004416">
    <property type="entry name" value="MnmG"/>
</dbReference>
<dbReference type="InterPro" id="IPR002218">
    <property type="entry name" value="MnmG-rel"/>
</dbReference>
<dbReference type="InterPro" id="IPR020595">
    <property type="entry name" value="MnmG-rel_CS"/>
</dbReference>
<dbReference type="InterPro" id="IPR026904">
    <property type="entry name" value="MnmG_C"/>
</dbReference>
<dbReference type="InterPro" id="IPR047001">
    <property type="entry name" value="MnmG_C_subdom"/>
</dbReference>
<dbReference type="InterPro" id="IPR044920">
    <property type="entry name" value="MnmG_C_subdom_sf"/>
</dbReference>
<dbReference type="InterPro" id="IPR040131">
    <property type="entry name" value="MnmG_N"/>
</dbReference>
<dbReference type="NCBIfam" id="TIGR00136">
    <property type="entry name" value="mnmG_gidA"/>
    <property type="match status" value="1"/>
</dbReference>
<dbReference type="PANTHER" id="PTHR11806">
    <property type="entry name" value="GLUCOSE INHIBITED DIVISION PROTEIN A"/>
    <property type="match status" value="1"/>
</dbReference>
<dbReference type="PANTHER" id="PTHR11806:SF0">
    <property type="entry name" value="PROTEIN MTO1 HOMOLOG, MITOCHONDRIAL"/>
    <property type="match status" value="1"/>
</dbReference>
<dbReference type="Pfam" id="PF01134">
    <property type="entry name" value="GIDA"/>
    <property type="match status" value="1"/>
</dbReference>
<dbReference type="Pfam" id="PF21680">
    <property type="entry name" value="GIDA_C_1st"/>
    <property type="match status" value="1"/>
</dbReference>
<dbReference type="Pfam" id="PF13932">
    <property type="entry name" value="SAM_GIDA_C"/>
    <property type="match status" value="1"/>
</dbReference>
<dbReference type="PRINTS" id="PR00469">
    <property type="entry name" value="PNDRDTASEII"/>
</dbReference>
<dbReference type="SMART" id="SM01228">
    <property type="entry name" value="GIDA_assoc_3"/>
    <property type="match status" value="1"/>
</dbReference>
<dbReference type="SUPFAM" id="SSF51905">
    <property type="entry name" value="FAD/NAD(P)-binding domain"/>
    <property type="match status" value="1"/>
</dbReference>
<dbReference type="PROSITE" id="PS01280">
    <property type="entry name" value="GIDA_1"/>
    <property type="match status" value="1"/>
</dbReference>
<dbReference type="PROSITE" id="PS01281">
    <property type="entry name" value="GIDA_2"/>
    <property type="match status" value="1"/>
</dbReference>
<accession>Q8PDG1</accession>